<protein>
    <recommendedName>
        <fullName evidence="1">Ribonuclease H</fullName>
        <shortName evidence="1">RNase H</shortName>
        <ecNumber evidence="1">3.1.26.4</ecNumber>
    </recommendedName>
</protein>
<reference key="1">
    <citation type="journal article" date="2005" name="Proc. Natl. Acad. Sci. U.S.A.">
        <title>Complete genome sequencing of Anaplasma marginale reveals that the surface is skewed to two superfamilies of outer membrane proteins.</title>
        <authorList>
            <person name="Brayton K.A."/>
            <person name="Kappmeyer L.S."/>
            <person name="Herndon D.R."/>
            <person name="Dark M.J."/>
            <person name="Tibbals D.L."/>
            <person name="Palmer G.H."/>
            <person name="McGuire T.C."/>
            <person name="Knowles D.P. Jr."/>
        </authorList>
    </citation>
    <scope>NUCLEOTIDE SEQUENCE [LARGE SCALE GENOMIC DNA]</scope>
    <source>
        <strain>St. Maries</strain>
    </source>
</reference>
<organism>
    <name type="scientific">Anaplasma marginale (strain St. Maries)</name>
    <dbReference type="NCBI Taxonomy" id="234826"/>
    <lineage>
        <taxon>Bacteria</taxon>
        <taxon>Pseudomonadati</taxon>
        <taxon>Pseudomonadota</taxon>
        <taxon>Alphaproteobacteria</taxon>
        <taxon>Rickettsiales</taxon>
        <taxon>Anaplasmataceae</taxon>
        <taxon>Anaplasma</taxon>
    </lineage>
</organism>
<proteinExistence type="inferred from homology"/>
<feature type="chain" id="PRO_0000332559" description="Ribonuclease H">
    <location>
        <begin position="1"/>
        <end position="154"/>
    </location>
</feature>
<feature type="domain" description="RNase H type-1" evidence="2">
    <location>
        <begin position="5"/>
        <end position="147"/>
    </location>
</feature>
<feature type="binding site" evidence="1">
    <location>
        <position position="14"/>
    </location>
    <ligand>
        <name>Mg(2+)</name>
        <dbReference type="ChEBI" id="CHEBI:18420"/>
        <label>1</label>
    </ligand>
</feature>
<feature type="binding site" evidence="1">
    <location>
        <position position="14"/>
    </location>
    <ligand>
        <name>Mg(2+)</name>
        <dbReference type="ChEBI" id="CHEBI:18420"/>
        <label>2</label>
    </ligand>
</feature>
<feature type="binding site" evidence="1">
    <location>
        <position position="53"/>
    </location>
    <ligand>
        <name>Mg(2+)</name>
        <dbReference type="ChEBI" id="CHEBI:18420"/>
        <label>1</label>
    </ligand>
</feature>
<feature type="binding site" evidence="1">
    <location>
        <position position="75"/>
    </location>
    <ligand>
        <name>Mg(2+)</name>
        <dbReference type="ChEBI" id="CHEBI:18420"/>
        <label>1</label>
    </ligand>
</feature>
<feature type="binding site" evidence="1">
    <location>
        <position position="139"/>
    </location>
    <ligand>
        <name>Mg(2+)</name>
        <dbReference type="ChEBI" id="CHEBI:18420"/>
        <label>2</label>
    </ligand>
</feature>
<keyword id="KW-0963">Cytoplasm</keyword>
<keyword id="KW-0255">Endonuclease</keyword>
<keyword id="KW-0378">Hydrolase</keyword>
<keyword id="KW-0460">Magnesium</keyword>
<keyword id="KW-0479">Metal-binding</keyword>
<keyword id="KW-0540">Nuclease</keyword>
<gene>
    <name evidence="1" type="primary">rnhA</name>
    <name type="ordered locus">AM126</name>
</gene>
<dbReference type="EC" id="3.1.26.4" evidence="1"/>
<dbReference type="EMBL" id="CP000030">
    <property type="protein sequence ID" value="AAV86271.1"/>
    <property type="status" value="ALT_INIT"/>
    <property type="molecule type" value="Genomic_DNA"/>
</dbReference>
<dbReference type="SMR" id="Q5PBQ8"/>
<dbReference type="KEGG" id="ama:AM126"/>
<dbReference type="PATRIC" id="fig|320483.3.peg.109"/>
<dbReference type="HOGENOM" id="CLU_030894_6_0_5"/>
<dbReference type="GO" id="GO:0005737">
    <property type="term" value="C:cytoplasm"/>
    <property type="evidence" value="ECO:0007669"/>
    <property type="project" value="UniProtKB-SubCell"/>
</dbReference>
<dbReference type="GO" id="GO:0000287">
    <property type="term" value="F:magnesium ion binding"/>
    <property type="evidence" value="ECO:0007669"/>
    <property type="project" value="UniProtKB-UniRule"/>
</dbReference>
<dbReference type="GO" id="GO:0003676">
    <property type="term" value="F:nucleic acid binding"/>
    <property type="evidence" value="ECO:0007669"/>
    <property type="project" value="InterPro"/>
</dbReference>
<dbReference type="GO" id="GO:0004523">
    <property type="term" value="F:RNA-DNA hybrid ribonuclease activity"/>
    <property type="evidence" value="ECO:0007669"/>
    <property type="project" value="UniProtKB-UniRule"/>
</dbReference>
<dbReference type="GO" id="GO:0043137">
    <property type="term" value="P:DNA replication, removal of RNA primer"/>
    <property type="evidence" value="ECO:0007669"/>
    <property type="project" value="TreeGrafter"/>
</dbReference>
<dbReference type="CDD" id="cd09278">
    <property type="entry name" value="RNase_HI_prokaryote_like"/>
    <property type="match status" value="1"/>
</dbReference>
<dbReference type="FunFam" id="3.30.420.10:FF:000089">
    <property type="entry name" value="Ribonuclease H"/>
    <property type="match status" value="1"/>
</dbReference>
<dbReference type="Gene3D" id="3.30.420.10">
    <property type="entry name" value="Ribonuclease H-like superfamily/Ribonuclease H"/>
    <property type="match status" value="1"/>
</dbReference>
<dbReference type="HAMAP" id="MF_00042">
    <property type="entry name" value="RNase_H"/>
    <property type="match status" value="1"/>
</dbReference>
<dbReference type="InterPro" id="IPR050092">
    <property type="entry name" value="RNase_H"/>
</dbReference>
<dbReference type="InterPro" id="IPR012337">
    <property type="entry name" value="RNaseH-like_sf"/>
</dbReference>
<dbReference type="InterPro" id="IPR002156">
    <property type="entry name" value="RNaseH_domain"/>
</dbReference>
<dbReference type="InterPro" id="IPR036397">
    <property type="entry name" value="RNaseH_sf"/>
</dbReference>
<dbReference type="InterPro" id="IPR022892">
    <property type="entry name" value="RNaseHI"/>
</dbReference>
<dbReference type="NCBIfam" id="NF001236">
    <property type="entry name" value="PRK00203.1"/>
    <property type="match status" value="1"/>
</dbReference>
<dbReference type="PANTHER" id="PTHR10642">
    <property type="entry name" value="RIBONUCLEASE H1"/>
    <property type="match status" value="1"/>
</dbReference>
<dbReference type="PANTHER" id="PTHR10642:SF26">
    <property type="entry name" value="RIBONUCLEASE H1"/>
    <property type="match status" value="1"/>
</dbReference>
<dbReference type="Pfam" id="PF00075">
    <property type="entry name" value="RNase_H"/>
    <property type="match status" value="1"/>
</dbReference>
<dbReference type="SUPFAM" id="SSF53098">
    <property type="entry name" value="Ribonuclease H-like"/>
    <property type="match status" value="1"/>
</dbReference>
<dbReference type="PROSITE" id="PS50879">
    <property type="entry name" value="RNASE_H_1"/>
    <property type="match status" value="1"/>
</dbReference>
<comment type="function">
    <text evidence="1">Endonuclease that specifically degrades the RNA of RNA-DNA hybrids.</text>
</comment>
<comment type="catalytic activity">
    <reaction evidence="1">
        <text>Endonucleolytic cleavage to 5'-phosphomonoester.</text>
        <dbReference type="EC" id="3.1.26.4"/>
    </reaction>
</comment>
<comment type="cofactor">
    <cofactor evidence="1">
        <name>Mg(2+)</name>
        <dbReference type="ChEBI" id="CHEBI:18420"/>
    </cofactor>
    <text evidence="1">Binds 1 Mg(2+) ion per subunit. May bind a second metal ion at a regulatory site, or after substrate binding.</text>
</comment>
<comment type="subunit">
    <text evidence="1">Monomer.</text>
</comment>
<comment type="subcellular location">
    <subcellularLocation>
        <location evidence="1">Cytoplasm</location>
    </subcellularLocation>
</comment>
<comment type="similarity">
    <text evidence="1">Belongs to the RNase H family.</text>
</comment>
<comment type="sequence caution" evidence="3">
    <conflict type="erroneous initiation">
        <sequence resource="EMBL-CDS" id="AAV86271"/>
    </conflict>
</comment>
<sequence>MVLMGKSRVAIYTDGACSGNPGPGGWGAVLRFGDGGERRISGGSDDTTNNRMELTAVIMALAALSGPCSVCVNTDSTYVKNGITEWIRKWKLNGWRTSNKSAVKNVDLWVELERLTLLHSIEWRWVKAHAGNEYNEEADMLARGEVERRMVIPK</sequence>
<evidence type="ECO:0000255" key="1">
    <source>
        <dbReference type="HAMAP-Rule" id="MF_00042"/>
    </source>
</evidence>
<evidence type="ECO:0000255" key="2">
    <source>
        <dbReference type="PROSITE-ProRule" id="PRU00408"/>
    </source>
</evidence>
<evidence type="ECO:0000305" key="3"/>
<accession>Q5PBQ8</accession>
<name>RNH_ANAMM</name>